<reference key="1">
    <citation type="journal article" date="2008" name="Proc. Natl. Acad. Sci. U.S.A.">
        <title>Niche adaptation and genome expansion in the chlorophyll d-producing cyanobacterium Acaryochloris marina.</title>
        <authorList>
            <person name="Swingley W.D."/>
            <person name="Chen M."/>
            <person name="Cheung P.C."/>
            <person name="Conrad A.L."/>
            <person name="Dejesa L.C."/>
            <person name="Hao J."/>
            <person name="Honchak B.M."/>
            <person name="Karbach L.E."/>
            <person name="Kurdoglu A."/>
            <person name="Lahiri S."/>
            <person name="Mastrian S.D."/>
            <person name="Miyashita H."/>
            <person name="Page L."/>
            <person name="Ramakrishna P."/>
            <person name="Satoh S."/>
            <person name="Sattley W.M."/>
            <person name="Shimada Y."/>
            <person name="Taylor H.L."/>
            <person name="Tomo T."/>
            <person name="Tsuchiya T."/>
            <person name="Wang Z.T."/>
            <person name="Raymond J."/>
            <person name="Mimuro M."/>
            <person name="Blankenship R.E."/>
            <person name="Touchman J.W."/>
        </authorList>
    </citation>
    <scope>NUCLEOTIDE SEQUENCE [LARGE SCALE GENOMIC DNA]</scope>
    <source>
        <strain>MBIC 11017</strain>
    </source>
</reference>
<organism>
    <name type="scientific">Acaryochloris marina (strain MBIC 11017)</name>
    <dbReference type="NCBI Taxonomy" id="329726"/>
    <lineage>
        <taxon>Bacteria</taxon>
        <taxon>Bacillati</taxon>
        <taxon>Cyanobacteriota</taxon>
        <taxon>Cyanophyceae</taxon>
        <taxon>Acaryochloridales</taxon>
        <taxon>Acaryochloridaceae</taxon>
        <taxon>Acaryochloris</taxon>
    </lineage>
</organism>
<accession>A8ZQ66</accession>
<proteinExistence type="inferred from homology"/>
<gene>
    <name evidence="1" type="primary">metG1</name>
    <name type="ordered locus">AM1_F0085</name>
</gene>
<evidence type="ECO:0000255" key="1">
    <source>
        <dbReference type="HAMAP-Rule" id="MF_00098"/>
    </source>
</evidence>
<protein>
    <recommendedName>
        <fullName evidence="1">Methionine--tRNA ligase 1</fullName>
        <ecNumber evidence="1">6.1.1.10</ecNumber>
    </recommendedName>
    <alternativeName>
        <fullName evidence="1">Methionyl-tRNA synthetase 1</fullName>
        <shortName evidence="1">MetRS 1</shortName>
    </alternativeName>
</protein>
<name>SYM1_ACAM1</name>
<sequence>MRYLITSALPYINGIKHLGNLVGSMLPADIYARFLRQEGEEVLYICATDEHGTPAEIAAIDAGLEVAEFCAKQYHKQKEIYKRFGLSFDYFGRTSAPENHELTQYFYQQLAKQNFIEEREISQFYALDDQRFLPDRYVTGTCPHCGYEQARGDQCENCTKVLTPTELIKPRSTISGSTHLELRTSRHLFLRLDKLSDEVRNWVDKQTQWSTLTKSIALKWLNEGLKSRCITRDLVWGVPVPTEGFERKVFYVWFDAPIGYISATKAWGDITNNDWECWWKESDDVHYTQFMAKDNLPFHTIMWPATILGSREPWKMVDYIKGFNWLNYYGGKFSTSSQRGVFLDQALEIASADNWRYMLIANAPESADSAFTWEQFQKQVNKELADNLGNFVNRILKFTASRFGMTLPEGGTPGDAEAELQVTCNELVEKLRKYLHNLEFRRATETLNALWRTGNQYIDVRAPWVLFKTDQDETAMVIRTCVNLIRLYAISSAPFIPHTTQALFDALQLTDVERRHTMTEASDLTLLAAGRSFMVPAPLFQKIDDDLVAELKAQYGGE</sequence>
<dbReference type="EC" id="6.1.1.10" evidence="1"/>
<dbReference type="EMBL" id="CP000843">
    <property type="protein sequence ID" value="ABW33099.1"/>
    <property type="molecule type" value="Genomic_DNA"/>
</dbReference>
<dbReference type="RefSeq" id="WP_012168149.1">
    <property type="nucleotide sequence ID" value="NC_009931.1"/>
</dbReference>
<dbReference type="SMR" id="A8ZQ66"/>
<dbReference type="KEGG" id="amr:AM1_F0085"/>
<dbReference type="HOGENOM" id="CLU_009710_1_2_3"/>
<dbReference type="OrthoDB" id="9810191at2"/>
<dbReference type="Proteomes" id="UP000000268">
    <property type="component" value="Plasmid pREB6"/>
</dbReference>
<dbReference type="GO" id="GO:0017101">
    <property type="term" value="C:aminoacyl-tRNA synthetase multienzyme complex"/>
    <property type="evidence" value="ECO:0007669"/>
    <property type="project" value="TreeGrafter"/>
</dbReference>
<dbReference type="GO" id="GO:0005829">
    <property type="term" value="C:cytosol"/>
    <property type="evidence" value="ECO:0007669"/>
    <property type="project" value="TreeGrafter"/>
</dbReference>
<dbReference type="GO" id="GO:0005524">
    <property type="term" value="F:ATP binding"/>
    <property type="evidence" value="ECO:0007669"/>
    <property type="project" value="UniProtKB-UniRule"/>
</dbReference>
<dbReference type="GO" id="GO:0046872">
    <property type="term" value="F:metal ion binding"/>
    <property type="evidence" value="ECO:0007669"/>
    <property type="project" value="UniProtKB-KW"/>
</dbReference>
<dbReference type="GO" id="GO:0004825">
    <property type="term" value="F:methionine-tRNA ligase activity"/>
    <property type="evidence" value="ECO:0007669"/>
    <property type="project" value="UniProtKB-UniRule"/>
</dbReference>
<dbReference type="GO" id="GO:0006431">
    <property type="term" value="P:methionyl-tRNA aminoacylation"/>
    <property type="evidence" value="ECO:0007669"/>
    <property type="project" value="UniProtKB-UniRule"/>
</dbReference>
<dbReference type="CDD" id="cd07957">
    <property type="entry name" value="Anticodon_Ia_Met"/>
    <property type="match status" value="1"/>
</dbReference>
<dbReference type="CDD" id="cd00814">
    <property type="entry name" value="MetRS_core"/>
    <property type="match status" value="1"/>
</dbReference>
<dbReference type="FunFam" id="2.20.28.20:FF:000001">
    <property type="entry name" value="Methionine--tRNA ligase"/>
    <property type="match status" value="1"/>
</dbReference>
<dbReference type="Gene3D" id="3.40.50.620">
    <property type="entry name" value="HUPs"/>
    <property type="match status" value="1"/>
</dbReference>
<dbReference type="Gene3D" id="1.10.730.10">
    <property type="entry name" value="Isoleucyl-tRNA Synthetase, Domain 1"/>
    <property type="match status" value="1"/>
</dbReference>
<dbReference type="Gene3D" id="2.20.28.20">
    <property type="entry name" value="Methionyl-tRNA synthetase, Zn-domain"/>
    <property type="match status" value="1"/>
</dbReference>
<dbReference type="HAMAP" id="MF_00098">
    <property type="entry name" value="Met_tRNA_synth_type1"/>
    <property type="match status" value="1"/>
</dbReference>
<dbReference type="InterPro" id="IPR041872">
    <property type="entry name" value="Anticodon_Met"/>
</dbReference>
<dbReference type="InterPro" id="IPR023458">
    <property type="entry name" value="Met-tRNA_ligase_1"/>
</dbReference>
<dbReference type="InterPro" id="IPR014758">
    <property type="entry name" value="Met-tRNA_synth"/>
</dbReference>
<dbReference type="InterPro" id="IPR015413">
    <property type="entry name" value="Methionyl/Leucyl_tRNA_Synth"/>
</dbReference>
<dbReference type="InterPro" id="IPR033911">
    <property type="entry name" value="MetRS_core"/>
</dbReference>
<dbReference type="InterPro" id="IPR029038">
    <property type="entry name" value="MetRS_Zn"/>
</dbReference>
<dbReference type="InterPro" id="IPR014729">
    <property type="entry name" value="Rossmann-like_a/b/a_fold"/>
</dbReference>
<dbReference type="InterPro" id="IPR009080">
    <property type="entry name" value="tRNAsynth_Ia_anticodon-bd"/>
</dbReference>
<dbReference type="NCBIfam" id="TIGR00398">
    <property type="entry name" value="metG"/>
    <property type="match status" value="1"/>
</dbReference>
<dbReference type="PANTHER" id="PTHR45765">
    <property type="entry name" value="METHIONINE--TRNA LIGASE"/>
    <property type="match status" value="1"/>
</dbReference>
<dbReference type="PANTHER" id="PTHR45765:SF1">
    <property type="entry name" value="METHIONINE--TRNA LIGASE, CYTOPLASMIC"/>
    <property type="match status" value="1"/>
</dbReference>
<dbReference type="Pfam" id="PF19303">
    <property type="entry name" value="Anticodon_3"/>
    <property type="match status" value="1"/>
</dbReference>
<dbReference type="Pfam" id="PF09334">
    <property type="entry name" value="tRNA-synt_1g"/>
    <property type="match status" value="1"/>
</dbReference>
<dbReference type="PRINTS" id="PR01041">
    <property type="entry name" value="TRNASYNTHMET"/>
</dbReference>
<dbReference type="SUPFAM" id="SSF47323">
    <property type="entry name" value="Anticodon-binding domain of a subclass of class I aminoacyl-tRNA synthetases"/>
    <property type="match status" value="1"/>
</dbReference>
<dbReference type="SUPFAM" id="SSF57770">
    <property type="entry name" value="Methionyl-tRNA synthetase (MetRS), Zn-domain"/>
    <property type="match status" value="1"/>
</dbReference>
<dbReference type="SUPFAM" id="SSF52374">
    <property type="entry name" value="Nucleotidylyl transferase"/>
    <property type="match status" value="1"/>
</dbReference>
<feature type="chain" id="PRO_0000331770" description="Methionine--tRNA ligase 1">
    <location>
        <begin position="1"/>
        <end position="558"/>
    </location>
</feature>
<feature type="short sequence motif" description="'HIGH' region">
    <location>
        <begin position="10"/>
        <end position="20"/>
    </location>
</feature>
<feature type="short sequence motif" description="'KMSKS' region">
    <location>
        <begin position="332"/>
        <end position="336"/>
    </location>
</feature>
<feature type="binding site" evidence="1">
    <location>
        <position position="142"/>
    </location>
    <ligand>
        <name>Zn(2+)</name>
        <dbReference type="ChEBI" id="CHEBI:29105"/>
    </ligand>
</feature>
<feature type="binding site" evidence="1">
    <location>
        <position position="145"/>
    </location>
    <ligand>
        <name>Zn(2+)</name>
        <dbReference type="ChEBI" id="CHEBI:29105"/>
    </ligand>
</feature>
<feature type="binding site" evidence="1">
    <location>
        <position position="155"/>
    </location>
    <ligand>
        <name>Zn(2+)</name>
        <dbReference type="ChEBI" id="CHEBI:29105"/>
    </ligand>
</feature>
<feature type="binding site" evidence="1">
    <location>
        <position position="158"/>
    </location>
    <ligand>
        <name>Zn(2+)</name>
        <dbReference type="ChEBI" id="CHEBI:29105"/>
    </ligand>
</feature>
<feature type="binding site" evidence="1">
    <location>
        <position position="335"/>
    </location>
    <ligand>
        <name>ATP</name>
        <dbReference type="ChEBI" id="CHEBI:30616"/>
    </ligand>
</feature>
<comment type="function">
    <text evidence="1">Is required not only for elongation of protein synthesis but also for the initiation of all mRNA translation through initiator tRNA(fMet) aminoacylation.</text>
</comment>
<comment type="catalytic activity">
    <reaction evidence="1">
        <text>tRNA(Met) + L-methionine + ATP = L-methionyl-tRNA(Met) + AMP + diphosphate</text>
        <dbReference type="Rhea" id="RHEA:13481"/>
        <dbReference type="Rhea" id="RHEA-COMP:9667"/>
        <dbReference type="Rhea" id="RHEA-COMP:9698"/>
        <dbReference type="ChEBI" id="CHEBI:30616"/>
        <dbReference type="ChEBI" id="CHEBI:33019"/>
        <dbReference type="ChEBI" id="CHEBI:57844"/>
        <dbReference type="ChEBI" id="CHEBI:78442"/>
        <dbReference type="ChEBI" id="CHEBI:78530"/>
        <dbReference type="ChEBI" id="CHEBI:456215"/>
        <dbReference type="EC" id="6.1.1.10"/>
    </reaction>
</comment>
<comment type="cofactor">
    <cofactor evidence="1">
        <name>Zn(2+)</name>
        <dbReference type="ChEBI" id="CHEBI:29105"/>
    </cofactor>
    <text evidence="1">Binds 1 zinc ion per subunit.</text>
</comment>
<comment type="subunit">
    <text evidence="1">Monomer.</text>
</comment>
<comment type="subcellular location">
    <subcellularLocation>
        <location evidence="1">Cytoplasm</location>
    </subcellularLocation>
</comment>
<comment type="similarity">
    <text evidence="1">Belongs to the class-I aminoacyl-tRNA synthetase family. MetG type 1 subfamily.</text>
</comment>
<keyword id="KW-0030">Aminoacyl-tRNA synthetase</keyword>
<keyword id="KW-0067">ATP-binding</keyword>
<keyword id="KW-0963">Cytoplasm</keyword>
<keyword id="KW-0436">Ligase</keyword>
<keyword id="KW-0479">Metal-binding</keyword>
<keyword id="KW-0547">Nucleotide-binding</keyword>
<keyword id="KW-0614">Plasmid</keyword>
<keyword id="KW-0648">Protein biosynthesis</keyword>
<keyword id="KW-1185">Reference proteome</keyword>
<keyword id="KW-0862">Zinc</keyword>
<geneLocation type="plasmid">
    <name>pREB6</name>
</geneLocation>